<proteinExistence type="inferred from homology"/>
<protein>
    <recommendedName>
        <fullName evidence="1">UPF0201 protein Msed_1787</fullName>
    </recommendedName>
</protein>
<comment type="similarity">
    <text evidence="1">Belongs to the UPF0201 family.</text>
</comment>
<feature type="chain" id="PRO_1000084874" description="UPF0201 protein Msed_1787">
    <location>
        <begin position="1"/>
        <end position="143"/>
    </location>
</feature>
<keyword id="KW-1185">Reference proteome</keyword>
<reference key="1">
    <citation type="journal article" date="2008" name="Appl. Environ. Microbiol.">
        <title>The genome sequence of the metal-mobilizing, extremely thermoacidophilic archaeon Metallosphaera sedula provides insights into bioleaching-associated metabolism.</title>
        <authorList>
            <person name="Auernik K.S."/>
            <person name="Maezato Y."/>
            <person name="Blum P.H."/>
            <person name="Kelly R.M."/>
        </authorList>
    </citation>
    <scope>NUCLEOTIDE SEQUENCE [LARGE SCALE GENOMIC DNA]</scope>
    <source>
        <strain>ATCC 51363 / DSM 5348 / JCM 9185 / NBRC 15509 / TH2</strain>
    </source>
</reference>
<gene>
    <name type="ordered locus">Msed_1787</name>
</gene>
<dbReference type="EMBL" id="CP000682">
    <property type="protein sequence ID" value="ABP95942.1"/>
    <property type="molecule type" value="Genomic_DNA"/>
</dbReference>
<dbReference type="RefSeq" id="WP_012021729.1">
    <property type="nucleotide sequence ID" value="NC_009440.1"/>
</dbReference>
<dbReference type="SMR" id="A4YHP0"/>
<dbReference type="STRING" id="399549.Msed_1787"/>
<dbReference type="GeneID" id="91756305"/>
<dbReference type="KEGG" id="mse:Msed_1787"/>
<dbReference type="eggNOG" id="arCOG01043">
    <property type="taxonomic scope" value="Archaea"/>
</dbReference>
<dbReference type="HOGENOM" id="CLU_134829_1_0_2"/>
<dbReference type="Proteomes" id="UP000000242">
    <property type="component" value="Chromosome"/>
</dbReference>
<dbReference type="Gene3D" id="3.30.1440.10">
    <property type="match status" value="1"/>
</dbReference>
<dbReference type="HAMAP" id="MF_01112">
    <property type="entry name" value="UPF0201"/>
    <property type="match status" value="1"/>
</dbReference>
<dbReference type="InterPro" id="IPR002739">
    <property type="entry name" value="PAB1135-like"/>
</dbReference>
<dbReference type="InterPro" id="IPR022803">
    <property type="entry name" value="Ribosomal_uL5_dom_sf"/>
</dbReference>
<dbReference type="NCBIfam" id="NF001687">
    <property type="entry name" value="PRK00447.1"/>
    <property type="match status" value="1"/>
</dbReference>
<dbReference type="PANTHER" id="PTHR39652">
    <property type="entry name" value="UPF0201 PROTEIN TK1335"/>
    <property type="match status" value="1"/>
</dbReference>
<dbReference type="PANTHER" id="PTHR39652:SF1">
    <property type="entry name" value="UPF0201 PROTEIN TK1335"/>
    <property type="match status" value="1"/>
</dbReference>
<dbReference type="Pfam" id="PF01877">
    <property type="entry name" value="RNA_binding"/>
    <property type="match status" value="1"/>
</dbReference>
<dbReference type="SUPFAM" id="SSF55282">
    <property type="entry name" value="RL5-like"/>
    <property type="match status" value="1"/>
</dbReference>
<accession>A4YHP0</accession>
<organism>
    <name type="scientific">Metallosphaera sedula (strain ATCC 51363 / DSM 5348 / JCM 9185 / NBRC 15509 / TH2)</name>
    <dbReference type="NCBI Taxonomy" id="399549"/>
    <lineage>
        <taxon>Archaea</taxon>
        <taxon>Thermoproteota</taxon>
        <taxon>Thermoprotei</taxon>
        <taxon>Sulfolobales</taxon>
        <taxon>Sulfolobaceae</taxon>
        <taxon>Metallosphaera</taxon>
    </lineage>
</organism>
<name>Y1787_METS5</name>
<evidence type="ECO:0000255" key="1">
    <source>
        <dbReference type="HAMAP-Rule" id="MF_01112"/>
    </source>
</evidence>
<sequence length="143" mass="16491">MTRIVVTAEIRPSEDEDKVKVAVANFFSFKSSKVEEGKYRLFVAESDTLSSLSKFHRVLREERILDAARKYLRRGIEGDRLTFMIHKQAAYVGKITFVDSENESPLGPITYTVFHRDLEAVVDWLAPRTSRGRPLWDNPMPED</sequence>